<name>Y2296_YERPP</name>
<organism>
    <name type="scientific">Yersinia pestis (strain Pestoides F)</name>
    <dbReference type="NCBI Taxonomy" id="386656"/>
    <lineage>
        <taxon>Bacteria</taxon>
        <taxon>Pseudomonadati</taxon>
        <taxon>Pseudomonadota</taxon>
        <taxon>Gammaproteobacteria</taxon>
        <taxon>Enterobacterales</taxon>
        <taxon>Yersiniaceae</taxon>
        <taxon>Yersinia</taxon>
    </lineage>
</organism>
<gene>
    <name type="ordered locus">YPDSF_2296</name>
</gene>
<comment type="similarity">
    <text evidence="1">Belongs to the UPF0434 family.</text>
</comment>
<accession>A4TN09</accession>
<dbReference type="EMBL" id="CP000668">
    <property type="protein sequence ID" value="ABP40671.1"/>
    <property type="molecule type" value="Genomic_DNA"/>
</dbReference>
<dbReference type="PIR" id="AI0170">
    <property type="entry name" value="AI0170"/>
</dbReference>
<dbReference type="RefSeq" id="WP_002211315.1">
    <property type="nucleotide sequence ID" value="NZ_CP009715.1"/>
</dbReference>
<dbReference type="SMR" id="A4TN09"/>
<dbReference type="KEGG" id="ypp:YPDSF_2296"/>
<dbReference type="PATRIC" id="fig|386656.14.peg.3788"/>
<dbReference type="GO" id="GO:0005829">
    <property type="term" value="C:cytosol"/>
    <property type="evidence" value="ECO:0007669"/>
    <property type="project" value="TreeGrafter"/>
</dbReference>
<dbReference type="FunFam" id="2.20.25.10:FF:000002">
    <property type="entry name" value="UPF0434 protein YcaR"/>
    <property type="match status" value="1"/>
</dbReference>
<dbReference type="Gene3D" id="2.20.25.10">
    <property type="match status" value="1"/>
</dbReference>
<dbReference type="HAMAP" id="MF_01187">
    <property type="entry name" value="UPF0434"/>
    <property type="match status" value="1"/>
</dbReference>
<dbReference type="InterPro" id="IPR005651">
    <property type="entry name" value="Trm112-like"/>
</dbReference>
<dbReference type="PANTHER" id="PTHR33505:SF4">
    <property type="entry name" value="PROTEIN PREY, MITOCHONDRIAL"/>
    <property type="match status" value="1"/>
</dbReference>
<dbReference type="PANTHER" id="PTHR33505">
    <property type="entry name" value="ZGC:162634"/>
    <property type="match status" value="1"/>
</dbReference>
<dbReference type="Pfam" id="PF03966">
    <property type="entry name" value="Trm112p"/>
    <property type="match status" value="1"/>
</dbReference>
<dbReference type="SUPFAM" id="SSF158997">
    <property type="entry name" value="Trm112p-like"/>
    <property type="match status" value="1"/>
</dbReference>
<evidence type="ECO:0000255" key="1">
    <source>
        <dbReference type="HAMAP-Rule" id="MF_01187"/>
    </source>
</evidence>
<feature type="chain" id="PRO_1000065861" description="UPF0434 protein YPDSF_2296">
    <location>
        <begin position="1"/>
        <end position="60"/>
    </location>
</feature>
<reference key="1">
    <citation type="submission" date="2007-02" db="EMBL/GenBank/DDBJ databases">
        <title>Complete sequence of chromosome of Yersinia pestis Pestoides F.</title>
        <authorList>
            <consortium name="US DOE Joint Genome Institute"/>
            <person name="Copeland A."/>
            <person name="Lucas S."/>
            <person name="Lapidus A."/>
            <person name="Barry K."/>
            <person name="Detter J.C."/>
            <person name="Glavina del Rio T."/>
            <person name="Hammon N."/>
            <person name="Israni S."/>
            <person name="Dalin E."/>
            <person name="Tice H."/>
            <person name="Pitluck S."/>
            <person name="Di Bartolo G."/>
            <person name="Chain P."/>
            <person name="Malfatti S."/>
            <person name="Shin M."/>
            <person name="Vergez L."/>
            <person name="Schmutz J."/>
            <person name="Larimer F."/>
            <person name="Land M."/>
            <person name="Hauser L."/>
            <person name="Worsham P."/>
            <person name="Chu M."/>
            <person name="Bearden S."/>
            <person name="Garcia E."/>
            <person name="Richardson P."/>
        </authorList>
    </citation>
    <scope>NUCLEOTIDE SEQUENCE [LARGE SCALE GENOMIC DNA]</scope>
    <source>
        <strain>Pestoides F</strain>
    </source>
</reference>
<sequence>MDHRLLEIVACPVCNGKLYFNKENLELVCKVDNLAYPVRDGIPVLLENEARPLSIDEKHA</sequence>
<protein>
    <recommendedName>
        <fullName evidence="1">UPF0434 protein YPDSF_2296</fullName>
    </recommendedName>
</protein>
<proteinExistence type="inferred from homology"/>